<comment type="function">
    <text evidence="1">One of the primary rRNA binding proteins, it binds directly to 16S rRNA where it nucleates assembly of the body of the 30S subunit.</text>
</comment>
<comment type="function">
    <text evidence="1">With S5 and S12 plays an important role in translational accuracy.</text>
</comment>
<comment type="subunit">
    <text evidence="1">Part of the 30S ribosomal subunit. Contacts protein S5. The interaction surface between S4 and S5 is involved in control of translational fidelity.</text>
</comment>
<comment type="similarity">
    <text evidence="1">Belongs to the universal ribosomal protein uS4 family.</text>
</comment>
<organism>
    <name type="scientific">Bifidobacterium adolescentis (strain ATCC 15703 / DSM 20083 / NCTC 11814 / E194a)</name>
    <dbReference type="NCBI Taxonomy" id="367928"/>
    <lineage>
        <taxon>Bacteria</taxon>
        <taxon>Bacillati</taxon>
        <taxon>Actinomycetota</taxon>
        <taxon>Actinomycetes</taxon>
        <taxon>Bifidobacteriales</taxon>
        <taxon>Bifidobacteriaceae</taxon>
        <taxon>Bifidobacterium</taxon>
    </lineage>
</organism>
<reference key="1">
    <citation type="submission" date="2006-12" db="EMBL/GenBank/DDBJ databases">
        <title>Bifidobacterium adolescentis complete genome sequence.</title>
        <authorList>
            <person name="Suzuki T."/>
            <person name="Tsuda Y."/>
            <person name="Kanou N."/>
            <person name="Inoue T."/>
            <person name="Kumazaki K."/>
            <person name="Nagano S."/>
            <person name="Hirai S."/>
            <person name="Tanaka K."/>
            <person name="Watanabe K."/>
        </authorList>
    </citation>
    <scope>NUCLEOTIDE SEQUENCE [LARGE SCALE GENOMIC DNA]</scope>
    <source>
        <strain>ATCC 15703 / DSM 20083 / NCTC 11814 / E194a</strain>
    </source>
</reference>
<evidence type="ECO:0000255" key="1">
    <source>
        <dbReference type="HAMAP-Rule" id="MF_01306"/>
    </source>
</evidence>
<evidence type="ECO:0000305" key="2"/>
<dbReference type="EMBL" id="AP009256">
    <property type="protein sequence ID" value="BAF39478.1"/>
    <property type="molecule type" value="Genomic_DNA"/>
</dbReference>
<dbReference type="RefSeq" id="WP_003809500.1">
    <property type="nucleotide sequence ID" value="NZ_CAXVNC010000001.1"/>
</dbReference>
<dbReference type="SMR" id="A1A195"/>
<dbReference type="STRING" id="367928.BAD_0697"/>
<dbReference type="PaxDb" id="1680-BADO_0742"/>
<dbReference type="DNASU" id="4556650"/>
<dbReference type="GeneID" id="4556650"/>
<dbReference type="KEGG" id="bad:BAD_0697"/>
<dbReference type="HOGENOM" id="CLU_092403_0_3_11"/>
<dbReference type="Proteomes" id="UP000008702">
    <property type="component" value="Chromosome"/>
</dbReference>
<dbReference type="GO" id="GO:0015935">
    <property type="term" value="C:small ribosomal subunit"/>
    <property type="evidence" value="ECO:0007669"/>
    <property type="project" value="InterPro"/>
</dbReference>
<dbReference type="GO" id="GO:0019843">
    <property type="term" value="F:rRNA binding"/>
    <property type="evidence" value="ECO:0007669"/>
    <property type="project" value="UniProtKB-UniRule"/>
</dbReference>
<dbReference type="GO" id="GO:0003735">
    <property type="term" value="F:structural constituent of ribosome"/>
    <property type="evidence" value="ECO:0007669"/>
    <property type="project" value="InterPro"/>
</dbReference>
<dbReference type="GO" id="GO:0042274">
    <property type="term" value="P:ribosomal small subunit biogenesis"/>
    <property type="evidence" value="ECO:0007669"/>
    <property type="project" value="TreeGrafter"/>
</dbReference>
<dbReference type="GO" id="GO:0006412">
    <property type="term" value="P:translation"/>
    <property type="evidence" value="ECO:0007669"/>
    <property type="project" value="UniProtKB-UniRule"/>
</dbReference>
<dbReference type="CDD" id="cd00165">
    <property type="entry name" value="S4"/>
    <property type="match status" value="1"/>
</dbReference>
<dbReference type="FunFam" id="3.10.290.10:FF:000001">
    <property type="entry name" value="30S ribosomal protein S4"/>
    <property type="match status" value="1"/>
</dbReference>
<dbReference type="Gene3D" id="1.10.1050.10">
    <property type="entry name" value="Ribosomal Protein S4 Delta 41, Chain A, domain 1"/>
    <property type="match status" value="1"/>
</dbReference>
<dbReference type="Gene3D" id="3.10.290.10">
    <property type="entry name" value="RNA-binding S4 domain"/>
    <property type="match status" value="1"/>
</dbReference>
<dbReference type="HAMAP" id="MF_01306_B">
    <property type="entry name" value="Ribosomal_uS4_B"/>
    <property type="match status" value="1"/>
</dbReference>
<dbReference type="InterPro" id="IPR022801">
    <property type="entry name" value="Ribosomal_uS4"/>
</dbReference>
<dbReference type="InterPro" id="IPR005709">
    <property type="entry name" value="Ribosomal_uS4_bac-type"/>
</dbReference>
<dbReference type="InterPro" id="IPR018079">
    <property type="entry name" value="Ribosomal_uS4_CS"/>
</dbReference>
<dbReference type="InterPro" id="IPR001912">
    <property type="entry name" value="Ribosomal_uS4_N"/>
</dbReference>
<dbReference type="InterPro" id="IPR002942">
    <property type="entry name" value="S4_RNA-bd"/>
</dbReference>
<dbReference type="InterPro" id="IPR036986">
    <property type="entry name" value="S4_RNA-bd_sf"/>
</dbReference>
<dbReference type="NCBIfam" id="NF003717">
    <property type="entry name" value="PRK05327.1"/>
    <property type="match status" value="1"/>
</dbReference>
<dbReference type="NCBIfam" id="TIGR01017">
    <property type="entry name" value="rpsD_bact"/>
    <property type="match status" value="1"/>
</dbReference>
<dbReference type="PANTHER" id="PTHR11831">
    <property type="entry name" value="30S 40S RIBOSOMAL PROTEIN"/>
    <property type="match status" value="1"/>
</dbReference>
<dbReference type="PANTHER" id="PTHR11831:SF4">
    <property type="entry name" value="SMALL RIBOSOMAL SUBUNIT PROTEIN US4M"/>
    <property type="match status" value="1"/>
</dbReference>
<dbReference type="Pfam" id="PF00163">
    <property type="entry name" value="Ribosomal_S4"/>
    <property type="match status" value="1"/>
</dbReference>
<dbReference type="Pfam" id="PF01479">
    <property type="entry name" value="S4"/>
    <property type="match status" value="1"/>
</dbReference>
<dbReference type="SMART" id="SM01390">
    <property type="entry name" value="Ribosomal_S4"/>
    <property type="match status" value="1"/>
</dbReference>
<dbReference type="SMART" id="SM00363">
    <property type="entry name" value="S4"/>
    <property type="match status" value="1"/>
</dbReference>
<dbReference type="SUPFAM" id="SSF55174">
    <property type="entry name" value="Alpha-L RNA-binding motif"/>
    <property type="match status" value="1"/>
</dbReference>
<dbReference type="PROSITE" id="PS00632">
    <property type="entry name" value="RIBOSOMAL_S4"/>
    <property type="match status" value="1"/>
</dbReference>
<dbReference type="PROSITE" id="PS50889">
    <property type="entry name" value="S4"/>
    <property type="match status" value="1"/>
</dbReference>
<protein>
    <recommendedName>
        <fullName evidence="1">Small ribosomal subunit protein uS4</fullName>
    </recommendedName>
    <alternativeName>
        <fullName evidence="2">30S ribosomal protein S4</fullName>
    </alternativeName>
</protein>
<sequence length="208" mass="23555">MTNVQRSRRQVRLSRALGIALTPKAQRIFEKRPYAPGEHGRTRRRTESDYAVRLREKQRLRAQYGISEKQLRAAYEKGTHTAGQTGNAMLTDLETRLDALVLRAGFARTTAQARQFVVHRHILVDGNIVDRPSYRVKPGQTIQVKAKSQTMVPFQAAAEGVHRDVLPAVPGYLDVNLPSLKATLTRKPEAEEIPVQVNIQYVVEFYAR</sequence>
<keyword id="KW-1185">Reference proteome</keyword>
<keyword id="KW-0687">Ribonucleoprotein</keyword>
<keyword id="KW-0689">Ribosomal protein</keyword>
<keyword id="KW-0694">RNA-binding</keyword>
<keyword id="KW-0699">rRNA-binding</keyword>
<accession>A1A195</accession>
<gene>
    <name evidence="1" type="primary">rpsD</name>
    <name type="ordered locus">BAD_0697</name>
</gene>
<proteinExistence type="inferred from homology"/>
<feature type="chain" id="PRO_0000293246" description="Small ribosomal subunit protein uS4">
    <location>
        <begin position="1"/>
        <end position="208"/>
    </location>
</feature>
<feature type="domain" description="S4 RNA-binding" evidence="1">
    <location>
        <begin position="95"/>
        <end position="155"/>
    </location>
</feature>
<name>RS4_BIFAA</name>